<sequence>MRQILIAPDSFKGTLSAGEVCQIALDVLAPEFDCVAHPLADGGEGTLEAIANNLDGQWQTVRVQGPLPDQTVDACYLWLPQEETAVIEMARASGLPLVPVGEHNPEIATSYGTGELITHAARRGAKQIQLAIGGSATNDAGLGLLMALGWQFLDSQGQSVGWGGQALGKVAEIIPPVLNAFPQVTVLCDVTNPFYGANGAAQVYAPQKGADPAMVQRLDQGLRHFARVVREFDGFEINFPRAGAAGGMGGGVAWALETKIESGFTAIAKLTQLEQAMAGCDLVITGEGCFDHQSPQGKVVGGVLELAKKINKPAIIVAGQCQLSQTVLPNVLKIFSLVGPDMPLEKALQHPQTALKKRLVQVKQYLIQSQN</sequence>
<name>Y1840_SYNY3</name>
<proteinExistence type="inferred from homology"/>
<evidence type="ECO:0000305" key="1"/>
<organism>
    <name type="scientific">Synechocystis sp. (strain ATCC 27184 / PCC 6803 / Kazusa)</name>
    <dbReference type="NCBI Taxonomy" id="1111708"/>
    <lineage>
        <taxon>Bacteria</taxon>
        <taxon>Bacillati</taxon>
        <taxon>Cyanobacteriota</taxon>
        <taxon>Cyanophyceae</taxon>
        <taxon>Synechococcales</taxon>
        <taxon>Merismopediaceae</taxon>
        <taxon>Synechocystis</taxon>
    </lineage>
</organism>
<reference key="1">
    <citation type="journal article" date="1996" name="DNA Res.">
        <title>Sequence analysis of the genome of the unicellular cyanobacterium Synechocystis sp. strain PCC6803. II. Sequence determination of the entire genome and assignment of potential protein-coding regions.</title>
        <authorList>
            <person name="Kaneko T."/>
            <person name="Sato S."/>
            <person name="Kotani H."/>
            <person name="Tanaka A."/>
            <person name="Asamizu E."/>
            <person name="Nakamura Y."/>
            <person name="Miyajima N."/>
            <person name="Hirosawa M."/>
            <person name="Sugiura M."/>
            <person name="Sasamoto S."/>
            <person name="Kimura T."/>
            <person name="Hosouchi T."/>
            <person name="Matsuno A."/>
            <person name="Muraki A."/>
            <person name="Nakazaki N."/>
            <person name="Naruo K."/>
            <person name="Okumura S."/>
            <person name="Shimpo S."/>
            <person name="Takeuchi C."/>
            <person name="Wada T."/>
            <person name="Watanabe A."/>
            <person name="Yamada M."/>
            <person name="Yasuda M."/>
            <person name="Tabata S."/>
        </authorList>
    </citation>
    <scope>NUCLEOTIDE SEQUENCE [LARGE SCALE GENOMIC DNA]</scope>
    <source>
        <strain>ATCC 27184 / PCC 6803 / Kazusa</strain>
    </source>
</reference>
<keyword id="KW-0418">Kinase</keyword>
<keyword id="KW-1185">Reference proteome</keyword>
<keyword id="KW-0808">Transferase</keyword>
<dbReference type="EMBL" id="BA000022">
    <property type="protein sequence ID" value="BAA17448.1"/>
    <property type="molecule type" value="Genomic_DNA"/>
</dbReference>
<dbReference type="PIR" id="S77345">
    <property type="entry name" value="S77345"/>
</dbReference>
<dbReference type="SMR" id="P73408"/>
<dbReference type="FunCoup" id="P73408">
    <property type="interactions" value="97"/>
</dbReference>
<dbReference type="IntAct" id="P73408">
    <property type="interactions" value="2"/>
</dbReference>
<dbReference type="STRING" id="1148.gene:10498312"/>
<dbReference type="PaxDb" id="1148-1652527"/>
<dbReference type="EnsemblBacteria" id="BAA17448">
    <property type="protein sequence ID" value="BAA17448"/>
    <property type="gene ID" value="BAA17448"/>
</dbReference>
<dbReference type="KEGG" id="syn:slr1840"/>
<dbReference type="eggNOG" id="COG1929">
    <property type="taxonomic scope" value="Bacteria"/>
</dbReference>
<dbReference type="InParanoid" id="P73408"/>
<dbReference type="PhylomeDB" id="P73408"/>
<dbReference type="BioCyc" id="MetaCyc:MONOMER-22032"/>
<dbReference type="BRENDA" id="2.7.1.165">
    <property type="organism ID" value="382"/>
</dbReference>
<dbReference type="Proteomes" id="UP000001425">
    <property type="component" value="Chromosome"/>
</dbReference>
<dbReference type="GO" id="GO:0043798">
    <property type="term" value="F:glycerate 2-kinase activity"/>
    <property type="evidence" value="ECO:0000318"/>
    <property type="project" value="GO_Central"/>
</dbReference>
<dbReference type="GO" id="GO:0008887">
    <property type="term" value="F:glycerate kinase activity"/>
    <property type="evidence" value="ECO:0007669"/>
    <property type="project" value="InterPro"/>
</dbReference>
<dbReference type="GO" id="GO:0031388">
    <property type="term" value="P:organic acid phosphorylation"/>
    <property type="evidence" value="ECO:0007669"/>
    <property type="project" value="InterPro"/>
</dbReference>
<dbReference type="Gene3D" id="3.40.50.10350">
    <property type="entry name" value="Glycerate kinase, domain 1"/>
    <property type="match status" value="1"/>
</dbReference>
<dbReference type="Gene3D" id="3.90.1510.10">
    <property type="entry name" value="Glycerate kinase, domain 2"/>
    <property type="match status" value="1"/>
</dbReference>
<dbReference type="InterPro" id="IPR018193">
    <property type="entry name" value="Glyc_kinase_flavodox-like_fold"/>
</dbReference>
<dbReference type="InterPro" id="IPR004381">
    <property type="entry name" value="Glycerate_kinase"/>
</dbReference>
<dbReference type="InterPro" id="IPR018197">
    <property type="entry name" value="Glycerate_kinase_RE-like"/>
</dbReference>
<dbReference type="InterPro" id="IPR036129">
    <property type="entry name" value="Glycerate_kinase_sf"/>
</dbReference>
<dbReference type="NCBIfam" id="TIGR00045">
    <property type="entry name" value="glycerate kinase"/>
    <property type="match status" value="1"/>
</dbReference>
<dbReference type="PANTHER" id="PTHR21599">
    <property type="entry name" value="GLYCERATE KINASE"/>
    <property type="match status" value="1"/>
</dbReference>
<dbReference type="PANTHER" id="PTHR21599:SF0">
    <property type="entry name" value="GLYCERATE KINASE"/>
    <property type="match status" value="1"/>
</dbReference>
<dbReference type="Pfam" id="PF02595">
    <property type="entry name" value="Gly_kinase"/>
    <property type="match status" value="1"/>
</dbReference>
<dbReference type="PIRSF" id="PIRSF006078">
    <property type="entry name" value="GlxK"/>
    <property type="match status" value="1"/>
</dbReference>
<dbReference type="SUPFAM" id="SSF110738">
    <property type="entry name" value="Glycerate kinase I"/>
    <property type="match status" value="1"/>
</dbReference>
<accession>P73408</accession>
<gene>
    <name type="ordered locus">slr1840</name>
</gene>
<comment type="similarity">
    <text evidence="1">Belongs to the glycerate kinase type-1 family.</text>
</comment>
<protein>
    <recommendedName>
        <fullName>Uncharacterized protein slr1840</fullName>
    </recommendedName>
</protein>
<feature type="chain" id="PRO_0000071541" description="Uncharacterized protein slr1840">
    <location>
        <begin position="1"/>
        <end position="371"/>
    </location>
</feature>